<sequence>MASPKETLQRRAARVRRQVKAVANGRPRLSVHRSSKNIYAQIIDDVRGVTLAAASTLDGDLKGKLKTGADSAAAAAVGKLVAERAVKAGVKDVVFDRGAFIYHGRVKALAEAAREGGLSF</sequence>
<evidence type="ECO:0000255" key="1">
    <source>
        <dbReference type="HAMAP-Rule" id="MF_01337"/>
    </source>
</evidence>
<evidence type="ECO:0000305" key="2"/>
<keyword id="KW-0687">Ribonucleoprotein</keyword>
<keyword id="KW-0689">Ribosomal protein</keyword>
<keyword id="KW-0694">RNA-binding</keyword>
<keyword id="KW-0699">rRNA-binding</keyword>
<protein>
    <recommendedName>
        <fullName evidence="1">Large ribosomal subunit protein uL18</fullName>
    </recommendedName>
    <alternativeName>
        <fullName evidence="2">50S ribosomal protein L18</fullName>
    </alternativeName>
</protein>
<gene>
    <name evidence="1" type="primary">rplR</name>
    <name type="ordered locus">BruAb1_1222</name>
</gene>
<accession>Q57CS4</accession>
<reference key="1">
    <citation type="journal article" date="2005" name="J. Bacteriol.">
        <title>Completion of the genome sequence of Brucella abortus and comparison to the highly similar genomes of Brucella melitensis and Brucella suis.</title>
        <authorList>
            <person name="Halling S.M."/>
            <person name="Peterson-Burch B.D."/>
            <person name="Bricker B.J."/>
            <person name="Zuerner R.L."/>
            <person name="Qing Z."/>
            <person name="Li L.-L."/>
            <person name="Kapur V."/>
            <person name="Alt D.P."/>
            <person name="Olsen S.C."/>
        </authorList>
    </citation>
    <scope>NUCLEOTIDE SEQUENCE [LARGE SCALE GENOMIC DNA]</scope>
    <source>
        <strain>9-941</strain>
    </source>
</reference>
<proteinExistence type="inferred from homology"/>
<comment type="function">
    <text evidence="1">This is one of the proteins that bind and probably mediate the attachment of the 5S RNA into the large ribosomal subunit, where it forms part of the central protuberance.</text>
</comment>
<comment type="subunit">
    <text evidence="1">Part of the 50S ribosomal subunit; part of the 5S rRNA/L5/L18/L25 subcomplex. Contacts the 5S and 23S rRNAs.</text>
</comment>
<comment type="similarity">
    <text evidence="1">Belongs to the universal ribosomal protein uL18 family.</text>
</comment>
<name>RL18_BRUAB</name>
<feature type="chain" id="PRO_0000131228" description="Large ribosomal subunit protein uL18">
    <location>
        <begin position="1"/>
        <end position="120"/>
    </location>
</feature>
<organism>
    <name type="scientific">Brucella abortus biovar 1 (strain 9-941)</name>
    <dbReference type="NCBI Taxonomy" id="262698"/>
    <lineage>
        <taxon>Bacteria</taxon>
        <taxon>Pseudomonadati</taxon>
        <taxon>Pseudomonadota</taxon>
        <taxon>Alphaproteobacteria</taxon>
        <taxon>Hyphomicrobiales</taxon>
        <taxon>Brucellaceae</taxon>
        <taxon>Brucella/Ochrobactrum group</taxon>
        <taxon>Brucella</taxon>
    </lineage>
</organism>
<dbReference type="EMBL" id="AE017223">
    <property type="protein sequence ID" value="AAX74560.1"/>
    <property type="molecule type" value="Genomic_DNA"/>
</dbReference>
<dbReference type="RefSeq" id="WP_002964346.1">
    <property type="nucleotide sequence ID" value="NC_006932.1"/>
</dbReference>
<dbReference type="SMR" id="Q57CS4"/>
<dbReference type="EnsemblBacteria" id="AAX74560">
    <property type="protein sequence ID" value="AAX74560"/>
    <property type="gene ID" value="BruAb1_1222"/>
</dbReference>
<dbReference type="GeneID" id="97533540"/>
<dbReference type="KEGG" id="bmb:BruAb1_1222"/>
<dbReference type="HOGENOM" id="CLU_098841_0_1_5"/>
<dbReference type="Proteomes" id="UP000000540">
    <property type="component" value="Chromosome I"/>
</dbReference>
<dbReference type="GO" id="GO:0022625">
    <property type="term" value="C:cytosolic large ribosomal subunit"/>
    <property type="evidence" value="ECO:0007669"/>
    <property type="project" value="TreeGrafter"/>
</dbReference>
<dbReference type="GO" id="GO:0008097">
    <property type="term" value="F:5S rRNA binding"/>
    <property type="evidence" value="ECO:0007669"/>
    <property type="project" value="TreeGrafter"/>
</dbReference>
<dbReference type="GO" id="GO:0003735">
    <property type="term" value="F:structural constituent of ribosome"/>
    <property type="evidence" value="ECO:0007669"/>
    <property type="project" value="InterPro"/>
</dbReference>
<dbReference type="GO" id="GO:0006412">
    <property type="term" value="P:translation"/>
    <property type="evidence" value="ECO:0007669"/>
    <property type="project" value="UniProtKB-UniRule"/>
</dbReference>
<dbReference type="CDD" id="cd00432">
    <property type="entry name" value="Ribosomal_L18_L5e"/>
    <property type="match status" value="1"/>
</dbReference>
<dbReference type="FunFam" id="3.30.420.100:FF:000001">
    <property type="entry name" value="50S ribosomal protein L18"/>
    <property type="match status" value="1"/>
</dbReference>
<dbReference type="Gene3D" id="3.30.420.100">
    <property type="match status" value="1"/>
</dbReference>
<dbReference type="HAMAP" id="MF_01337_B">
    <property type="entry name" value="Ribosomal_uL18_B"/>
    <property type="match status" value="1"/>
</dbReference>
<dbReference type="InterPro" id="IPR004389">
    <property type="entry name" value="Ribosomal_uL18_bac-type"/>
</dbReference>
<dbReference type="InterPro" id="IPR005484">
    <property type="entry name" value="Ribosomal_uL18_bac/euk"/>
</dbReference>
<dbReference type="NCBIfam" id="TIGR00060">
    <property type="entry name" value="L18_bact"/>
    <property type="match status" value="1"/>
</dbReference>
<dbReference type="PANTHER" id="PTHR12899">
    <property type="entry name" value="39S RIBOSOMAL PROTEIN L18, MITOCHONDRIAL"/>
    <property type="match status" value="1"/>
</dbReference>
<dbReference type="PANTHER" id="PTHR12899:SF3">
    <property type="entry name" value="LARGE RIBOSOMAL SUBUNIT PROTEIN UL18M"/>
    <property type="match status" value="1"/>
</dbReference>
<dbReference type="Pfam" id="PF00861">
    <property type="entry name" value="Ribosomal_L18p"/>
    <property type="match status" value="1"/>
</dbReference>
<dbReference type="SUPFAM" id="SSF53137">
    <property type="entry name" value="Translational machinery components"/>
    <property type="match status" value="1"/>
</dbReference>